<comment type="function">
    <text evidence="1">This protein is involved in the replication of the phage DNA.</text>
</comment>
<comment type="similarity">
    <text evidence="2">Belongs to the podoviruses GP17 family.</text>
</comment>
<proteinExistence type="inferred from homology"/>
<feature type="chain" id="PRO_0000106603" description="Early protein GP17">
    <location>
        <begin position="1"/>
        <end position="129"/>
    </location>
</feature>
<evidence type="ECO:0000250" key="1"/>
<evidence type="ECO:0000305" key="2"/>
<sequence length="129" mass="14940">MNNYQLTIKEVLYIIKTSRNYGKKSSAKLHTITVKELITDVLNLKYTIDIILTELNSVDRVKMNNYMLAILEAVEYIEDTQEIISSLSNKDTSAKGLSKLPKPRLVEIFLRLENLMYRIEDILEVTNND</sequence>
<organism>
    <name type="scientific">Bacillus phage B103</name>
    <name type="common">Bacteriophage B103</name>
    <dbReference type="NCBI Taxonomy" id="2994042"/>
    <lineage>
        <taxon>Viruses</taxon>
        <taxon>Duplodnaviria</taxon>
        <taxon>Heunggongvirae</taxon>
        <taxon>Uroviricota</taxon>
        <taxon>Caudoviricetes</taxon>
        <taxon>Salasmaviridae</taxon>
        <taxon>Picovirinae</taxon>
        <taxon>Beecentumtrevirus</taxon>
        <taxon>Beecentumtrevirus B103</taxon>
    </lineage>
</organism>
<dbReference type="EMBL" id="X99260">
    <property type="protein sequence ID" value="CAA67648.1"/>
    <property type="molecule type" value="Genomic_DNA"/>
</dbReference>
<dbReference type="RefSeq" id="NP_690651.1">
    <property type="nucleotide sequence ID" value="NC_004165.1"/>
</dbReference>
<dbReference type="KEGG" id="vg:955365"/>
<dbReference type="Proteomes" id="UP000000971">
    <property type="component" value="Segment"/>
</dbReference>
<dbReference type="GO" id="GO:0006260">
    <property type="term" value="P:DNA replication"/>
    <property type="evidence" value="ECO:0007669"/>
    <property type="project" value="UniProtKB-KW"/>
</dbReference>
<keyword id="KW-0235">DNA replication</keyword>
<keyword id="KW-0244">Early protein</keyword>
<name>VG17_BPB03</name>
<protein>
    <recommendedName>
        <fullName>Early protein GP17</fullName>
    </recommendedName>
</protein>
<gene>
    <name type="primary">17</name>
</gene>
<organismHost>
    <name type="scientific">Bacillus subtilis</name>
    <dbReference type="NCBI Taxonomy" id="1423"/>
</organismHost>
<reference key="1">
    <citation type="journal article" date="1997" name="Gene">
        <title>Bacteriophage B103: complete DNA sequence of its genome and relationship to other Bacillus phages.</title>
        <authorList>
            <person name="Pecenkova T."/>
            <person name="Benes V."/>
            <person name="Paces J."/>
            <person name="Vlcek C."/>
            <person name="Paces V."/>
        </authorList>
    </citation>
    <scope>NUCLEOTIDE SEQUENCE [LARGE SCALE GENOMIC DNA]</scope>
</reference>
<accession>Q37898</accession>